<keyword id="KW-0963">Cytoplasm</keyword>
<keyword id="KW-0378">Hydrolase</keyword>
<keyword id="KW-0546">Nucleotide metabolism</keyword>
<name>NTPPA_HYDCU</name>
<organism>
    <name type="scientific">Hydrogenovibrio crunogenus (strain DSM 25203 / XCL-2)</name>
    <name type="common">Thiomicrospira crunogena</name>
    <dbReference type="NCBI Taxonomy" id="317025"/>
    <lineage>
        <taxon>Bacteria</taxon>
        <taxon>Pseudomonadati</taxon>
        <taxon>Pseudomonadota</taxon>
        <taxon>Gammaproteobacteria</taxon>
        <taxon>Thiotrichales</taxon>
        <taxon>Piscirickettsiaceae</taxon>
        <taxon>Hydrogenovibrio</taxon>
    </lineage>
</organism>
<sequence length="192" mass="21408">MKRRLYLSSSSPRRKELLDQAGIPFDLVNAPVEETGLPNESPESFVLRMAVEKALSGFNKVPGKNVWVLGSDTIILKDGKVFGKPKHKMDAYRMLMSFSGEEHTVMTSIAIVNDGAVYSDVCQTNVFFRPISDSEFEQYWATGEAEDKAGAYGIQGQAAKFIEKIEGSYSAVMGLPLYELDKLLRESNFYSE</sequence>
<reference key="1">
    <citation type="journal article" date="2006" name="PLoS Biol.">
        <title>The genome of deep-sea vent chemolithoautotroph Thiomicrospira crunogena XCL-2.</title>
        <authorList>
            <person name="Scott K.M."/>
            <person name="Sievert S.M."/>
            <person name="Abril F.N."/>
            <person name="Ball L.A."/>
            <person name="Barrett C.J."/>
            <person name="Blake R.A."/>
            <person name="Boller A.J."/>
            <person name="Chain P.S.G."/>
            <person name="Clark J.A."/>
            <person name="Davis C.R."/>
            <person name="Detter C."/>
            <person name="Do K.F."/>
            <person name="Dobrinski K.P."/>
            <person name="Faza B.I."/>
            <person name="Fitzpatrick K.A."/>
            <person name="Freyermuth S.K."/>
            <person name="Harmer T.L."/>
            <person name="Hauser L.J."/>
            <person name="Huegler M."/>
            <person name="Kerfeld C.A."/>
            <person name="Klotz M.G."/>
            <person name="Kong W.W."/>
            <person name="Land M."/>
            <person name="Lapidus A."/>
            <person name="Larimer F.W."/>
            <person name="Longo D.L."/>
            <person name="Lucas S."/>
            <person name="Malfatti S.A."/>
            <person name="Massey S.E."/>
            <person name="Martin D.D."/>
            <person name="McCuddin Z."/>
            <person name="Meyer F."/>
            <person name="Moore J.L."/>
            <person name="Ocampo L.H. Jr."/>
            <person name="Paul J.H."/>
            <person name="Paulsen I.T."/>
            <person name="Reep D.K."/>
            <person name="Ren Q."/>
            <person name="Ross R.L."/>
            <person name="Sato P.Y."/>
            <person name="Thomas P."/>
            <person name="Tinkham L.E."/>
            <person name="Zeruth G.T."/>
        </authorList>
    </citation>
    <scope>NUCLEOTIDE SEQUENCE [LARGE SCALE GENOMIC DNA]</scope>
    <source>
        <strain>DSM 25203 / XCL-2</strain>
    </source>
</reference>
<evidence type="ECO:0000255" key="1">
    <source>
        <dbReference type="HAMAP-Rule" id="MF_00528"/>
    </source>
</evidence>
<accession>Q31FH4</accession>
<proteinExistence type="inferred from homology"/>
<feature type="chain" id="PRO_0000267458" description="dTTP/UTP pyrophosphatase">
    <location>
        <begin position="1"/>
        <end position="192"/>
    </location>
</feature>
<feature type="active site" description="Proton acceptor" evidence="1">
    <location>
        <position position="72"/>
    </location>
</feature>
<feature type="site" description="Important for substrate specificity" evidence="1">
    <location>
        <position position="13"/>
    </location>
</feature>
<feature type="site" description="Important for substrate specificity" evidence="1">
    <location>
        <position position="73"/>
    </location>
</feature>
<feature type="site" description="Important for substrate specificity" evidence="1">
    <location>
        <position position="155"/>
    </location>
</feature>
<protein>
    <recommendedName>
        <fullName evidence="1">dTTP/UTP pyrophosphatase</fullName>
        <shortName evidence="1">dTTPase/UTPase</shortName>
        <ecNumber evidence="1">3.6.1.9</ecNumber>
    </recommendedName>
    <alternativeName>
        <fullName evidence="1">Nucleoside triphosphate pyrophosphatase</fullName>
    </alternativeName>
    <alternativeName>
        <fullName evidence="1">Nucleotide pyrophosphatase</fullName>
        <shortName evidence="1">Nucleotide PPase</shortName>
    </alternativeName>
</protein>
<dbReference type="EC" id="3.6.1.9" evidence="1"/>
<dbReference type="EMBL" id="CP000109">
    <property type="protein sequence ID" value="ABB42099.1"/>
    <property type="molecule type" value="Genomic_DNA"/>
</dbReference>
<dbReference type="SMR" id="Q31FH4"/>
<dbReference type="STRING" id="317025.Tcr_1507"/>
<dbReference type="KEGG" id="tcx:Tcr_1507"/>
<dbReference type="eggNOG" id="COG0424">
    <property type="taxonomic scope" value="Bacteria"/>
</dbReference>
<dbReference type="HOGENOM" id="CLU_040416_2_1_6"/>
<dbReference type="OrthoDB" id="9807767at2"/>
<dbReference type="GO" id="GO:0005737">
    <property type="term" value="C:cytoplasm"/>
    <property type="evidence" value="ECO:0007669"/>
    <property type="project" value="UniProtKB-SubCell"/>
</dbReference>
<dbReference type="GO" id="GO:0036218">
    <property type="term" value="F:dTTP diphosphatase activity"/>
    <property type="evidence" value="ECO:0007669"/>
    <property type="project" value="RHEA"/>
</dbReference>
<dbReference type="GO" id="GO:0036221">
    <property type="term" value="F:UTP diphosphatase activity"/>
    <property type="evidence" value="ECO:0007669"/>
    <property type="project" value="RHEA"/>
</dbReference>
<dbReference type="GO" id="GO:0009117">
    <property type="term" value="P:nucleotide metabolic process"/>
    <property type="evidence" value="ECO:0007669"/>
    <property type="project" value="UniProtKB-KW"/>
</dbReference>
<dbReference type="CDD" id="cd00555">
    <property type="entry name" value="Maf"/>
    <property type="match status" value="1"/>
</dbReference>
<dbReference type="Gene3D" id="3.90.950.10">
    <property type="match status" value="1"/>
</dbReference>
<dbReference type="HAMAP" id="MF_00528">
    <property type="entry name" value="Maf"/>
    <property type="match status" value="1"/>
</dbReference>
<dbReference type="InterPro" id="IPR029001">
    <property type="entry name" value="ITPase-like_fam"/>
</dbReference>
<dbReference type="InterPro" id="IPR003697">
    <property type="entry name" value="Maf-like"/>
</dbReference>
<dbReference type="NCBIfam" id="TIGR00172">
    <property type="entry name" value="maf"/>
    <property type="match status" value="1"/>
</dbReference>
<dbReference type="PANTHER" id="PTHR43213">
    <property type="entry name" value="BIFUNCTIONAL DTTP/UTP PYROPHOSPHATASE/METHYLTRANSFERASE PROTEIN-RELATED"/>
    <property type="match status" value="1"/>
</dbReference>
<dbReference type="PANTHER" id="PTHR43213:SF5">
    <property type="entry name" value="BIFUNCTIONAL DTTP_UTP PYROPHOSPHATASE_METHYLTRANSFERASE PROTEIN-RELATED"/>
    <property type="match status" value="1"/>
</dbReference>
<dbReference type="Pfam" id="PF02545">
    <property type="entry name" value="Maf"/>
    <property type="match status" value="1"/>
</dbReference>
<dbReference type="PIRSF" id="PIRSF006305">
    <property type="entry name" value="Maf"/>
    <property type="match status" value="1"/>
</dbReference>
<dbReference type="SUPFAM" id="SSF52972">
    <property type="entry name" value="ITPase-like"/>
    <property type="match status" value="1"/>
</dbReference>
<gene>
    <name type="ordered locus">Tcr_1507</name>
</gene>
<comment type="function">
    <text evidence="1">Nucleoside triphosphate pyrophosphatase that hydrolyzes dTTP and UTP. May have a dual role in cell division arrest and in preventing the incorporation of modified nucleotides into cellular nucleic acids.</text>
</comment>
<comment type="catalytic activity">
    <reaction evidence="1">
        <text>dTTP + H2O = dTMP + diphosphate + H(+)</text>
        <dbReference type="Rhea" id="RHEA:28534"/>
        <dbReference type="ChEBI" id="CHEBI:15377"/>
        <dbReference type="ChEBI" id="CHEBI:15378"/>
        <dbReference type="ChEBI" id="CHEBI:33019"/>
        <dbReference type="ChEBI" id="CHEBI:37568"/>
        <dbReference type="ChEBI" id="CHEBI:63528"/>
        <dbReference type="EC" id="3.6.1.9"/>
    </reaction>
</comment>
<comment type="catalytic activity">
    <reaction evidence="1">
        <text>UTP + H2O = UMP + diphosphate + H(+)</text>
        <dbReference type="Rhea" id="RHEA:29395"/>
        <dbReference type="ChEBI" id="CHEBI:15377"/>
        <dbReference type="ChEBI" id="CHEBI:15378"/>
        <dbReference type="ChEBI" id="CHEBI:33019"/>
        <dbReference type="ChEBI" id="CHEBI:46398"/>
        <dbReference type="ChEBI" id="CHEBI:57865"/>
        <dbReference type="EC" id="3.6.1.9"/>
    </reaction>
</comment>
<comment type="cofactor">
    <cofactor evidence="1">
        <name>a divalent metal cation</name>
        <dbReference type="ChEBI" id="CHEBI:60240"/>
    </cofactor>
</comment>
<comment type="subcellular location">
    <subcellularLocation>
        <location evidence="1">Cytoplasm</location>
    </subcellularLocation>
</comment>
<comment type="similarity">
    <text evidence="1">Belongs to the Maf family. YhdE subfamily.</text>
</comment>